<comment type="subunit">
    <text evidence="1">Component of the small ribosomal subunit. Mature ribosomes consist of a small (40S) and a large (60S) subunit. The 40S subunit contains about 33 different proteins and 1 molecule of RNA (18S). The 60S subunit contains about 49 different proteins and 3 molecules of RNA (25S, 5.8S and 5S) (By similarity).</text>
</comment>
<comment type="similarity">
    <text evidence="2">Belongs to the universal ribosomal protein uL16 family.</text>
</comment>
<comment type="sequence caution" evidence="2">
    <conflict type="frameshift">
        <sequence resource="EMBL" id="CM000130"/>
    </conflict>
</comment>
<comment type="sequence caution" evidence="2">
    <conflict type="miscellaneous discrepancy">
        <sequence resource="EMBL" id="CM000130"/>
    </conflict>
    <text>Sequencing errors.</text>
</comment>
<gene>
    <name type="primary">SG12</name>
    <name type="synonym">QM1</name>
    <name type="ORF">OsI_017927</name>
</gene>
<organism>
    <name type="scientific">Oryza sativa subsp. indica</name>
    <name type="common">Rice</name>
    <dbReference type="NCBI Taxonomy" id="39946"/>
    <lineage>
        <taxon>Eukaryota</taxon>
        <taxon>Viridiplantae</taxon>
        <taxon>Streptophyta</taxon>
        <taxon>Embryophyta</taxon>
        <taxon>Tracheophyta</taxon>
        <taxon>Spermatophyta</taxon>
        <taxon>Magnoliopsida</taxon>
        <taxon>Liliopsida</taxon>
        <taxon>Poales</taxon>
        <taxon>Poaceae</taxon>
        <taxon>BOP clade</taxon>
        <taxon>Oryzoideae</taxon>
        <taxon>Oryzeae</taxon>
        <taxon>Oryzinae</taxon>
        <taxon>Oryza</taxon>
        <taxon>Oryza sativa</taxon>
    </lineage>
</organism>
<keyword id="KW-1185">Reference proteome</keyword>
<keyword id="KW-0687">Ribonucleoprotein</keyword>
<keyword id="KW-0689">Ribosomal protein</keyword>
<name>RL102_ORYSI</name>
<proteinExistence type="evidence at transcript level"/>
<dbReference type="EMBL" id="U55048">
    <property type="protein sequence ID" value="AAA98698.1"/>
    <property type="molecule type" value="Genomic_DNA"/>
</dbReference>
<dbReference type="EMBL" id="X81692">
    <property type="protein sequence ID" value="CAA57340.1"/>
    <property type="molecule type" value="Genomic_DNA"/>
</dbReference>
<dbReference type="EMBL" id="CM000130">
    <property type="status" value="NOT_ANNOTATED_CDS"/>
    <property type="molecule type" value="Genomic_DNA"/>
</dbReference>
<dbReference type="EMBL" id="X64621">
    <property type="protein sequence ID" value="CAA45905.1"/>
    <property type="molecule type" value="mRNA"/>
</dbReference>
<dbReference type="PIR" id="S19224">
    <property type="entry name" value="S19224"/>
</dbReference>
<dbReference type="PIR" id="S49596">
    <property type="entry name" value="S49596"/>
</dbReference>
<dbReference type="SMR" id="A2Y0T4"/>
<dbReference type="STRING" id="39946.A2Y0T4"/>
<dbReference type="iPTMnet" id="A2Y0T4"/>
<dbReference type="Proteomes" id="UP000007015">
    <property type="component" value="Chromosome 5"/>
</dbReference>
<dbReference type="GO" id="GO:1990904">
    <property type="term" value="C:ribonucleoprotein complex"/>
    <property type="evidence" value="ECO:0007669"/>
    <property type="project" value="UniProtKB-KW"/>
</dbReference>
<dbReference type="GO" id="GO:0005840">
    <property type="term" value="C:ribosome"/>
    <property type="evidence" value="ECO:0007669"/>
    <property type="project" value="UniProtKB-KW"/>
</dbReference>
<dbReference type="GO" id="GO:0003735">
    <property type="term" value="F:structural constituent of ribosome"/>
    <property type="evidence" value="ECO:0007669"/>
    <property type="project" value="InterPro"/>
</dbReference>
<dbReference type="GO" id="GO:0006412">
    <property type="term" value="P:translation"/>
    <property type="evidence" value="ECO:0007669"/>
    <property type="project" value="InterPro"/>
</dbReference>
<dbReference type="CDD" id="cd01433">
    <property type="entry name" value="Ribosomal_L16_L10e"/>
    <property type="match status" value="1"/>
</dbReference>
<dbReference type="FunFam" id="3.90.1170.10:FF:000002">
    <property type="entry name" value="60S ribosomal protein L10"/>
    <property type="match status" value="1"/>
</dbReference>
<dbReference type="FunFam" id="3.30.60.300:FF:000003">
    <property type="entry name" value="60S ribosomal protein L10, putative"/>
    <property type="match status" value="1"/>
</dbReference>
<dbReference type="Gene3D" id="3.90.1170.10">
    <property type="entry name" value="Ribosomal protein L10e/L16"/>
    <property type="match status" value="1"/>
</dbReference>
<dbReference type="InterPro" id="IPR047873">
    <property type="entry name" value="Ribosomal_uL16"/>
</dbReference>
<dbReference type="InterPro" id="IPR018255">
    <property type="entry name" value="Ribosomal_uL16_CS_euk_arc"/>
</dbReference>
<dbReference type="InterPro" id="IPR016180">
    <property type="entry name" value="Ribosomal_uL16_dom"/>
</dbReference>
<dbReference type="InterPro" id="IPR001197">
    <property type="entry name" value="Ribosomal_uL16_euk_arch"/>
</dbReference>
<dbReference type="InterPro" id="IPR036920">
    <property type="entry name" value="Ribosomal_uL16_sf"/>
</dbReference>
<dbReference type="NCBIfam" id="NF003239">
    <property type="entry name" value="PRK04199.1-4"/>
    <property type="match status" value="1"/>
</dbReference>
<dbReference type="NCBIfam" id="TIGR00279">
    <property type="entry name" value="uL16_euk_arch"/>
    <property type="match status" value="1"/>
</dbReference>
<dbReference type="PANTHER" id="PTHR11726">
    <property type="entry name" value="60S RIBOSOMAL PROTEIN L10"/>
    <property type="match status" value="1"/>
</dbReference>
<dbReference type="Pfam" id="PF00252">
    <property type="entry name" value="Ribosomal_L16"/>
    <property type="match status" value="1"/>
</dbReference>
<dbReference type="PIRSF" id="PIRSF005590">
    <property type="entry name" value="Ribosomal_L10"/>
    <property type="match status" value="1"/>
</dbReference>
<dbReference type="SUPFAM" id="SSF54686">
    <property type="entry name" value="Ribosomal protein L16p/L10e"/>
    <property type="match status" value="1"/>
</dbReference>
<dbReference type="PROSITE" id="PS01257">
    <property type="entry name" value="RIBOSOMAL_L10E"/>
    <property type="match status" value="1"/>
</dbReference>
<reference key="1">
    <citation type="thesis" date="1996" institute="Fudan University" country="China">
        <title>Isolation and Characterization of a rice QM gene, tumor suppressor or development regulator.</title>
        <authorList>
            <person name="Zong H."/>
            <person name="Jiang Y."/>
            <person name="Cao K."/>
        </authorList>
    </citation>
    <scope>NUCLEOTIDE SEQUENCE [GENOMIC DNA]</scope>
    <source>
        <strain>cv. Guang-Lu-Ai No.4</strain>
        <tissue>Seedling</tissue>
    </source>
</reference>
<reference key="2">
    <citation type="submission" date="1994-09" db="EMBL/GenBank/DDBJ databases">
        <title>Isolation and characterization of two rice genes encoding a putative tumor suppressor.</title>
        <authorList>
            <person name="Kim J.K."/>
        </authorList>
    </citation>
    <scope>NUCLEOTIDE SEQUENCE [GENOMIC DNA]</scope>
    <source>
        <strain>cv. IR36</strain>
    </source>
</reference>
<reference key="3">
    <citation type="journal article" date="2005" name="PLoS Biol.">
        <title>The genomes of Oryza sativa: a history of duplications.</title>
        <authorList>
            <person name="Yu J."/>
            <person name="Wang J."/>
            <person name="Lin W."/>
            <person name="Li S."/>
            <person name="Li H."/>
            <person name="Zhou J."/>
            <person name="Ni P."/>
            <person name="Dong W."/>
            <person name="Hu S."/>
            <person name="Zeng C."/>
            <person name="Zhang J."/>
            <person name="Zhang Y."/>
            <person name="Li R."/>
            <person name="Xu Z."/>
            <person name="Li S."/>
            <person name="Li X."/>
            <person name="Zheng H."/>
            <person name="Cong L."/>
            <person name="Lin L."/>
            <person name="Yin J."/>
            <person name="Geng J."/>
            <person name="Li G."/>
            <person name="Shi J."/>
            <person name="Liu J."/>
            <person name="Lv H."/>
            <person name="Li J."/>
            <person name="Wang J."/>
            <person name="Deng Y."/>
            <person name="Ran L."/>
            <person name="Shi X."/>
            <person name="Wang X."/>
            <person name="Wu Q."/>
            <person name="Li C."/>
            <person name="Ren X."/>
            <person name="Wang J."/>
            <person name="Wang X."/>
            <person name="Li D."/>
            <person name="Liu D."/>
            <person name="Zhang X."/>
            <person name="Ji Z."/>
            <person name="Zhao W."/>
            <person name="Sun Y."/>
            <person name="Zhang Z."/>
            <person name="Bao J."/>
            <person name="Han Y."/>
            <person name="Dong L."/>
            <person name="Ji J."/>
            <person name="Chen P."/>
            <person name="Wu S."/>
            <person name="Liu J."/>
            <person name="Xiao Y."/>
            <person name="Bu D."/>
            <person name="Tan J."/>
            <person name="Yang L."/>
            <person name="Ye C."/>
            <person name="Zhang J."/>
            <person name="Xu J."/>
            <person name="Zhou Y."/>
            <person name="Yu Y."/>
            <person name="Zhang B."/>
            <person name="Zhuang S."/>
            <person name="Wei H."/>
            <person name="Liu B."/>
            <person name="Lei M."/>
            <person name="Yu H."/>
            <person name="Li Y."/>
            <person name="Xu H."/>
            <person name="Wei S."/>
            <person name="He X."/>
            <person name="Fang L."/>
            <person name="Zhang Z."/>
            <person name="Zhang Y."/>
            <person name="Huang X."/>
            <person name="Su Z."/>
            <person name="Tong W."/>
            <person name="Li J."/>
            <person name="Tong Z."/>
            <person name="Li S."/>
            <person name="Ye J."/>
            <person name="Wang L."/>
            <person name="Fang L."/>
            <person name="Lei T."/>
            <person name="Chen C.-S."/>
            <person name="Chen H.-C."/>
            <person name="Xu Z."/>
            <person name="Li H."/>
            <person name="Huang H."/>
            <person name="Zhang F."/>
            <person name="Xu H."/>
            <person name="Li N."/>
            <person name="Zhao C."/>
            <person name="Li S."/>
            <person name="Dong L."/>
            <person name="Huang Y."/>
            <person name="Li L."/>
            <person name="Xi Y."/>
            <person name="Qi Q."/>
            <person name="Li W."/>
            <person name="Zhang B."/>
            <person name="Hu W."/>
            <person name="Zhang Y."/>
            <person name="Tian X."/>
            <person name="Jiao Y."/>
            <person name="Liang X."/>
            <person name="Jin J."/>
            <person name="Gao L."/>
            <person name="Zheng W."/>
            <person name="Hao B."/>
            <person name="Liu S.-M."/>
            <person name="Wang W."/>
            <person name="Yuan L."/>
            <person name="Cao M."/>
            <person name="McDermott J."/>
            <person name="Samudrala R."/>
            <person name="Wang J."/>
            <person name="Wong G.K.-S."/>
            <person name="Yang H."/>
        </authorList>
    </citation>
    <scope>NUCLEOTIDE SEQUENCE [LARGE SCALE GENOMIC DNA]</scope>
    <source>
        <strain>cv. 93-11</strain>
    </source>
</reference>
<reference key="4">
    <citation type="submission" date="1992-02" db="EMBL/GenBank/DDBJ databases">
        <title>A rice novel gene.</title>
        <authorList>
            <person name="Kim J.K."/>
        </authorList>
    </citation>
    <scope>NUCLEOTIDE SEQUENCE [MRNA] OF 77-219</scope>
    <source>
        <strain>cv. IR36</strain>
        <tissue>Seed</tissue>
    </source>
</reference>
<accession>A2Y0T4</accession>
<accession>P45636</accession>
<accession>Q40649</accession>
<accession>Q40717</accession>
<protein>
    <recommendedName>
        <fullName evidence="2">Large ribosomal subunit protein uL16y</fullName>
    </recommendedName>
    <alternativeName>
        <fullName>60S ribosomal protein L10-2</fullName>
    </alternativeName>
    <alternativeName>
        <fullName>Protein QM1</fullName>
    </alternativeName>
    <alternativeName>
        <fullName>Putative tumor suppressor SG12</fullName>
    </alternativeName>
</protein>
<evidence type="ECO:0000250" key="1"/>
<evidence type="ECO:0000305" key="2"/>
<sequence>MGRRPARCYRQIKNKPYPKSRYCRGVPDPKIRIYDVGMKKKGVDEFSHCVHLVSWEKENVTSEALEAARIACNKYMTKSAGKDAFHLRVRVHPFHVLRINKMLSCAGADRLQTGMRGAFGKPQGTCARVDIGQVLLSVRCKPNNAVHASEALRRAKFKFPGRQKIIESRKWGFTKFSRDEYVRLKSEGRIMPDGVNAKLLGCHGRLSARAPGKAFLSAA</sequence>
<feature type="chain" id="PRO_0000302054" description="Large ribosomal subunit protein uL16y">
    <location>
        <begin position="1"/>
        <end position="219"/>
    </location>
</feature>
<feature type="sequence conflict" description="In Ref. 2; CAA57340." evidence="2" ref="2">
    <original>Y</original>
    <variation>N</variation>
    <location>
        <position position="9"/>
    </location>
</feature>
<feature type="sequence conflict" description="In Ref. 2; CAA57340." evidence="2" ref="2">
    <original>AR</original>
    <variation>G</variation>
    <location>
        <begin position="68"/>
        <end position="69"/>
    </location>
</feature>
<feature type="sequence conflict" description="In Ref. 4; CAA45905." evidence="2" ref="4">
    <original>TKS</original>
    <variation>EFP</variation>
    <location>
        <begin position="77"/>
        <end position="79"/>
    </location>
</feature>
<feature type="sequence conflict" description="In Ref. 2; CAA57340." evidence="2" ref="2">
    <original>L</original>
    <variation>F</variation>
    <location>
        <position position="216"/>
    </location>
</feature>